<keyword id="KW-0963">Cytoplasm</keyword>
<keyword id="KW-0489">Methyltransferase</keyword>
<keyword id="KW-0949">S-adenosyl-L-methionine</keyword>
<keyword id="KW-0808">Transferase</keyword>
<keyword id="KW-0819">tRNA processing</keyword>
<sequence>MFFAVITLFPEMFEAITAYGISGRAAKRDIVQVTCINPRDFAEGNYRRVDERPFGGGPGMVMMAEPLAKAINHAKQLASQAGCVHVPVVYMSPQGKTLNEQAVQQFVDYDGLIVLCGRYEGVDERLIQHYVDQEWSIGDYVLSGGELPAMVLLDSIIRRLPNVMSDEQSAIQDSFVDGLLDCPQYTKPDQFEGLDVPEILKSGHHANIEKWRFLQRYQRTLERRPELIEQVTLTKQQKKWLSDEQG</sequence>
<feature type="chain" id="PRO_1000130120" description="tRNA (guanine-N(1)-)-methyltransferase">
    <location>
        <begin position="1"/>
        <end position="246"/>
    </location>
</feature>
<feature type="binding site" evidence="1">
    <location>
        <position position="117"/>
    </location>
    <ligand>
        <name>S-adenosyl-L-methionine</name>
        <dbReference type="ChEBI" id="CHEBI:59789"/>
    </ligand>
</feature>
<feature type="binding site" evidence="1">
    <location>
        <begin position="137"/>
        <end position="142"/>
    </location>
    <ligand>
        <name>S-adenosyl-L-methionine</name>
        <dbReference type="ChEBI" id="CHEBI:59789"/>
    </ligand>
</feature>
<comment type="function">
    <text evidence="1">Specifically methylates guanosine-37 in various tRNAs.</text>
</comment>
<comment type="catalytic activity">
    <reaction evidence="1">
        <text>guanosine(37) in tRNA + S-adenosyl-L-methionine = N(1)-methylguanosine(37) in tRNA + S-adenosyl-L-homocysteine + H(+)</text>
        <dbReference type="Rhea" id="RHEA:36899"/>
        <dbReference type="Rhea" id="RHEA-COMP:10145"/>
        <dbReference type="Rhea" id="RHEA-COMP:10147"/>
        <dbReference type="ChEBI" id="CHEBI:15378"/>
        <dbReference type="ChEBI" id="CHEBI:57856"/>
        <dbReference type="ChEBI" id="CHEBI:59789"/>
        <dbReference type="ChEBI" id="CHEBI:73542"/>
        <dbReference type="ChEBI" id="CHEBI:74269"/>
        <dbReference type="EC" id="2.1.1.228"/>
    </reaction>
</comment>
<comment type="subunit">
    <text evidence="1">Homodimer.</text>
</comment>
<comment type="subcellular location">
    <subcellularLocation>
        <location evidence="1">Cytoplasm</location>
    </subcellularLocation>
</comment>
<comment type="similarity">
    <text evidence="1">Belongs to the RNA methyltransferase TrmD family.</text>
</comment>
<proteinExistence type="inferred from homology"/>
<reference key="1">
    <citation type="journal article" date="2008" name="Antimicrob. Agents Chemother.">
        <title>Whole-genome pyrosequencing of an epidemic multidrug-resistant Acinetobacter baumannii strain belonging to the European clone II group.</title>
        <authorList>
            <person name="Iacono M."/>
            <person name="Villa L."/>
            <person name="Fortini D."/>
            <person name="Bordoni R."/>
            <person name="Imperi F."/>
            <person name="Bonnal R.J."/>
            <person name="Sicheritz-Ponten T."/>
            <person name="De Bellis G."/>
            <person name="Visca P."/>
            <person name="Cassone A."/>
            <person name="Carattoli A."/>
        </authorList>
    </citation>
    <scope>NUCLEOTIDE SEQUENCE [LARGE SCALE GENOMIC DNA]</scope>
    <source>
        <strain>ACICU</strain>
    </source>
</reference>
<accession>B2HZV3</accession>
<name>TRMD_ACIBC</name>
<dbReference type="EC" id="2.1.1.228" evidence="1"/>
<dbReference type="EMBL" id="CP000863">
    <property type="protein sequence ID" value="ACC58671.1"/>
    <property type="molecule type" value="Genomic_DNA"/>
</dbReference>
<dbReference type="RefSeq" id="WP_000464598.1">
    <property type="nucleotide sequence ID" value="NZ_CP031380.1"/>
</dbReference>
<dbReference type="SMR" id="B2HZV3"/>
<dbReference type="GeneID" id="92895397"/>
<dbReference type="KEGG" id="abc:ACICU_03361"/>
<dbReference type="HOGENOM" id="CLU_047363_0_1_6"/>
<dbReference type="Proteomes" id="UP000008839">
    <property type="component" value="Chromosome"/>
</dbReference>
<dbReference type="GO" id="GO:0005829">
    <property type="term" value="C:cytosol"/>
    <property type="evidence" value="ECO:0007669"/>
    <property type="project" value="TreeGrafter"/>
</dbReference>
<dbReference type="GO" id="GO:0052906">
    <property type="term" value="F:tRNA (guanine(37)-N1)-methyltransferase activity"/>
    <property type="evidence" value="ECO:0007669"/>
    <property type="project" value="UniProtKB-UniRule"/>
</dbReference>
<dbReference type="GO" id="GO:0002939">
    <property type="term" value="P:tRNA N1-guanine methylation"/>
    <property type="evidence" value="ECO:0007669"/>
    <property type="project" value="TreeGrafter"/>
</dbReference>
<dbReference type="CDD" id="cd18080">
    <property type="entry name" value="TrmD-like"/>
    <property type="match status" value="1"/>
</dbReference>
<dbReference type="FunFam" id="1.10.1270.20:FF:000001">
    <property type="entry name" value="tRNA (guanine-N(1)-)-methyltransferase"/>
    <property type="match status" value="1"/>
</dbReference>
<dbReference type="FunFam" id="3.40.1280.10:FF:000001">
    <property type="entry name" value="tRNA (guanine-N(1)-)-methyltransferase"/>
    <property type="match status" value="1"/>
</dbReference>
<dbReference type="Gene3D" id="3.40.1280.10">
    <property type="match status" value="1"/>
</dbReference>
<dbReference type="Gene3D" id="1.10.1270.20">
    <property type="entry name" value="tRNA(m1g37)methyltransferase, domain 2"/>
    <property type="match status" value="1"/>
</dbReference>
<dbReference type="HAMAP" id="MF_00605">
    <property type="entry name" value="TrmD"/>
    <property type="match status" value="1"/>
</dbReference>
<dbReference type="InterPro" id="IPR029028">
    <property type="entry name" value="Alpha/beta_knot_MTases"/>
</dbReference>
<dbReference type="InterPro" id="IPR023148">
    <property type="entry name" value="tRNA_m1G_MeTrfase_C_sf"/>
</dbReference>
<dbReference type="InterPro" id="IPR002649">
    <property type="entry name" value="tRNA_m1G_MeTrfase_TrmD"/>
</dbReference>
<dbReference type="InterPro" id="IPR029026">
    <property type="entry name" value="tRNA_m1G_MTases_N"/>
</dbReference>
<dbReference type="InterPro" id="IPR016009">
    <property type="entry name" value="tRNA_MeTrfase_TRMD/TRM10"/>
</dbReference>
<dbReference type="NCBIfam" id="NF000648">
    <property type="entry name" value="PRK00026.1"/>
    <property type="match status" value="1"/>
</dbReference>
<dbReference type="NCBIfam" id="TIGR00088">
    <property type="entry name" value="trmD"/>
    <property type="match status" value="1"/>
</dbReference>
<dbReference type="PANTHER" id="PTHR46417">
    <property type="entry name" value="TRNA (GUANINE-N(1)-)-METHYLTRANSFERASE"/>
    <property type="match status" value="1"/>
</dbReference>
<dbReference type="PANTHER" id="PTHR46417:SF1">
    <property type="entry name" value="TRNA (GUANINE-N(1)-)-METHYLTRANSFERASE"/>
    <property type="match status" value="1"/>
</dbReference>
<dbReference type="Pfam" id="PF01746">
    <property type="entry name" value="tRNA_m1G_MT"/>
    <property type="match status" value="1"/>
</dbReference>
<dbReference type="PIRSF" id="PIRSF000386">
    <property type="entry name" value="tRNA_mtase"/>
    <property type="match status" value="1"/>
</dbReference>
<dbReference type="SUPFAM" id="SSF75217">
    <property type="entry name" value="alpha/beta knot"/>
    <property type="match status" value="1"/>
</dbReference>
<protein>
    <recommendedName>
        <fullName evidence="1">tRNA (guanine-N(1)-)-methyltransferase</fullName>
        <ecNumber evidence="1">2.1.1.228</ecNumber>
    </recommendedName>
    <alternativeName>
        <fullName evidence="1">M1G-methyltransferase</fullName>
    </alternativeName>
    <alternativeName>
        <fullName evidence="1">tRNA [GM37] methyltransferase</fullName>
    </alternativeName>
</protein>
<gene>
    <name evidence="1" type="primary">trmD</name>
    <name type="ordered locus">ACICU_03361</name>
</gene>
<evidence type="ECO:0000255" key="1">
    <source>
        <dbReference type="HAMAP-Rule" id="MF_00605"/>
    </source>
</evidence>
<organism>
    <name type="scientific">Acinetobacter baumannii (strain ACICU)</name>
    <dbReference type="NCBI Taxonomy" id="405416"/>
    <lineage>
        <taxon>Bacteria</taxon>
        <taxon>Pseudomonadati</taxon>
        <taxon>Pseudomonadota</taxon>
        <taxon>Gammaproteobacteria</taxon>
        <taxon>Moraxellales</taxon>
        <taxon>Moraxellaceae</taxon>
        <taxon>Acinetobacter</taxon>
        <taxon>Acinetobacter calcoaceticus/baumannii complex</taxon>
    </lineage>
</organism>